<proteinExistence type="inferred from homology"/>
<protein>
    <recommendedName>
        <fullName evidence="1">S-ribosylhomocysteine lyase</fullName>
        <ecNumber evidence="1">4.4.1.21</ecNumber>
    </recommendedName>
    <alternativeName>
        <fullName evidence="1">AI-2 synthesis protein</fullName>
    </alternativeName>
    <alternativeName>
        <fullName evidence="1">Autoinducer-2 production protein LuxS</fullName>
    </alternativeName>
</protein>
<sequence>MTKMNVESFNLDHTKVVAPFIRLAGTMEGLNGDVIHKYDIRFKQPNKEHMDMPGLHSLEHLMAENIRNHSDKVVDLSPMGCQTGFYVSFINHDNYDDVLNIVEATLNDVLNATEVPACNEVQCGWAASHSLEGAKTIAQAFLDKRNEWHDVFGTGK</sequence>
<gene>
    <name evidence="1" type="primary">luxS</name>
    <name type="ordered locus">NWMN_2038</name>
</gene>
<feature type="chain" id="PRO_1000071260" description="S-ribosylhomocysteine lyase">
    <location>
        <begin position="1"/>
        <end position="156"/>
    </location>
</feature>
<feature type="binding site" evidence="1">
    <location>
        <position position="56"/>
    </location>
    <ligand>
        <name>Fe cation</name>
        <dbReference type="ChEBI" id="CHEBI:24875"/>
    </ligand>
</feature>
<feature type="binding site" evidence="1">
    <location>
        <position position="60"/>
    </location>
    <ligand>
        <name>Fe cation</name>
        <dbReference type="ChEBI" id="CHEBI:24875"/>
    </ligand>
</feature>
<feature type="binding site" evidence="1">
    <location>
        <position position="123"/>
    </location>
    <ligand>
        <name>Fe cation</name>
        <dbReference type="ChEBI" id="CHEBI:24875"/>
    </ligand>
</feature>
<organism>
    <name type="scientific">Staphylococcus aureus (strain Newman)</name>
    <dbReference type="NCBI Taxonomy" id="426430"/>
    <lineage>
        <taxon>Bacteria</taxon>
        <taxon>Bacillati</taxon>
        <taxon>Bacillota</taxon>
        <taxon>Bacilli</taxon>
        <taxon>Bacillales</taxon>
        <taxon>Staphylococcaceae</taxon>
        <taxon>Staphylococcus</taxon>
    </lineage>
</organism>
<keyword id="KW-0071">Autoinducer synthesis</keyword>
<keyword id="KW-0408">Iron</keyword>
<keyword id="KW-0456">Lyase</keyword>
<keyword id="KW-0479">Metal-binding</keyword>
<keyword id="KW-0673">Quorum sensing</keyword>
<accession>A6QIX8</accession>
<name>LUXS_STAAE</name>
<reference key="1">
    <citation type="journal article" date="2008" name="J. Bacteriol.">
        <title>Genome sequence of Staphylococcus aureus strain Newman and comparative analysis of staphylococcal genomes: polymorphism and evolution of two major pathogenicity islands.</title>
        <authorList>
            <person name="Baba T."/>
            <person name="Bae T."/>
            <person name="Schneewind O."/>
            <person name="Takeuchi F."/>
            <person name="Hiramatsu K."/>
        </authorList>
    </citation>
    <scope>NUCLEOTIDE SEQUENCE [LARGE SCALE GENOMIC DNA]</scope>
    <source>
        <strain>Newman</strain>
    </source>
</reference>
<evidence type="ECO:0000255" key="1">
    <source>
        <dbReference type="HAMAP-Rule" id="MF_00091"/>
    </source>
</evidence>
<dbReference type="EC" id="4.4.1.21" evidence="1"/>
<dbReference type="EMBL" id="AP009351">
    <property type="protein sequence ID" value="BAF68310.1"/>
    <property type="molecule type" value="Genomic_DNA"/>
</dbReference>
<dbReference type="RefSeq" id="WP_000164421.1">
    <property type="nucleotide sequence ID" value="NZ_JBBIAE010000008.1"/>
</dbReference>
<dbReference type="SMR" id="A6QIX8"/>
<dbReference type="KEGG" id="sae:NWMN_2038"/>
<dbReference type="HOGENOM" id="CLU_107531_2_0_9"/>
<dbReference type="Proteomes" id="UP000006386">
    <property type="component" value="Chromosome"/>
</dbReference>
<dbReference type="GO" id="GO:0005506">
    <property type="term" value="F:iron ion binding"/>
    <property type="evidence" value="ECO:0007669"/>
    <property type="project" value="InterPro"/>
</dbReference>
<dbReference type="GO" id="GO:0043768">
    <property type="term" value="F:S-ribosylhomocysteine lyase activity"/>
    <property type="evidence" value="ECO:0007669"/>
    <property type="project" value="UniProtKB-UniRule"/>
</dbReference>
<dbReference type="GO" id="GO:0009372">
    <property type="term" value="P:quorum sensing"/>
    <property type="evidence" value="ECO:0007669"/>
    <property type="project" value="UniProtKB-UniRule"/>
</dbReference>
<dbReference type="Gene3D" id="3.30.1360.80">
    <property type="entry name" value="S-ribosylhomocysteinase (LuxS)"/>
    <property type="match status" value="1"/>
</dbReference>
<dbReference type="HAMAP" id="MF_00091">
    <property type="entry name" value="LuxS"/>
    <property type="match status" value="1"/>
</dbReference>
<dbReference type="InterPro" id="IPR037005">
    <property type="entry name" value="LuxS_sf"/>
</dbReference>
<dbReference type="InterPro" id="IPR011249">
    <property type="entry name" value="Metalloenz_LuxS/M16"/>
</dbReference>
<dbReference type="InterPro" id="IPR003815">
    <property type="entry name" value="S-ribosylhomocysteinase"/>
</dbReference>
<dbReference type="NCBIfam" id="NF002604">
    <property type="entry name" value="PRK02260.1-4"/>
    <property type="match status" value="1"/>
</dbReference>
<dbReference type="PANTHER" id="PTHR35799">
    <property type="entry name" value="S-RIBOSYLHOMOCYSTEINE LYASE"/>
    <property type="match status" value="1"/>
</dbReference>
<dbReference type="PANTHER" id="PTHR35799:SF1">
    <property type="entry name" value="S-RIBOSYLHOMOCYSTEINE LYASE"/>
    <property type="match status" value="1"/>
</dbReference>
<dbReference type="Pfam" id="PF02664">
    <property type="entry name" value="LuxS"/>
    <property type="match status" value="1"/>
</dbReference>
<dbReference type="PIRSF" id="PIRSF006160">
    <property type="entry name" value="AI2"/>
    <property type="match status" value="1"/>
</dbReference>
<dbReference type="PRINTS" id="PR01487">
    <property type="entry name" value="LUXSPROTEIN"/>
</dbReference>
<dbReference type="SUPFAM" id="SSF63411">
    <property type="entry name" value="LuxS/MPP-like metallohydrolase"/>
    <property type="match status" value="1"/>
</dbReference>
<comment type="function">
    <text evidence="1">Involved in the synthesis of autoinducer 2 (AI-2) which is secreted by bacteria and is used to communicate both the cell density and the metabolic potential of the environment. The regulation of gene expression in response to changes in cell density is called quorum sensing. Catalyzes the transformation of S-ribosylhomocysteine (RHC) to homocysteine (HC) and 4,5-dihydroxy-2,3-pentadione (DPD).</text>
</comment>
<comment type="catalytic activity">
    <reaction evidence="1">
        <text>S-(5-deoxy-D-ribos-5-yl)-L-homocysteine = (S)-4,5-dihydroxypentane-2,3-dione + L-homocysteine</text>
        <dbReference type="Rhea" id="RHEA:17753"/>
        <dbReference type="ChEBI" id="CHEBI:29484"/>
        <dbReference type="ChEBI" id="CHEBI:58195"/>
        <dbReference type="ChEBI" id="CHEBI:58199"/>
        <dbReference type="EC" id="4.4.1.21"/>
    </reaction>
</comment>
<comment type="cofactor">
    <cofactor evidence="1">
        <name>Fe cation</name>
        <dbReference type="ChEBI" id="CHEBI:24875"/>
    </cofactor>
    <text evidence="1">Binds 1 Fe cation per subunit.</text>
</comment>
<comment type="subunit">
    <text evidence="1">Homodimer.</text>
</comment>
<comment type="similarity">
    <text evidence="1">Belongs to the LuxS family.</text>
</comment>